<accession>Q7Z7M1</accession>
<accession>Q86SL4</accession>
<accession>Q8NH12</accession>
<sequence length="963" mass="104087">MDAPWGAGERWLHGAAVDRSGVSLGPPPTPQVNQGTLGPQVAPVAAGEVVKTAGGVCKFSGQRLSWWQAQESCEQQFGHLALQPPDGVLASRLRDPVWVGQREAPLRRPPQRRARTTAVLVFDERTADRAARLRSPLPELAALTACTHVQWDCASPDPAALFSVAAPALPNALQLRAFAEPGGVVRAALVVRGQHAPFLAAFRADGRWHHVCATWEQRGGRWALFSDGRRRAGARGLGAGHPVPSGGILVLGQDQDSLGGGFSVRHALSGNLTDFHLWARALSPAQLHRARACAPPSEGLLFRWDPGALDVTPSLLPTVWVRLLCPVPSEECPTWNPGPRSEGSELCLEPQPFLCCYRTEPYRRLQDAQSWPGQDVISRVNALANDIVLLPDPLSEVHGALSPAEASSFLGLLEHVLAMEMAPLGPAALLAVVRFLKRVVALGAGDPELLLTGPWEQLSQGVVSVASLVLEEQVADTWLSLREVIGGPMALVASVQRLAPLLSTSMTSERPRMRIQHRHAGLSGVTVIHSWFTSRVFQHTLEGPDLEPQAPASSEEANRVQRFLSTQVGSAIISSEVWDVTGEVNVAMTFHLQHRAQSPLFPPHPPSPYTGGAWATTGCSVAALYLDSTACFCNHSTSFAILLQIYEVQRGPEEESLLRTLSFVGCGVSFCALTTTFLLFLVAGVPKSERTTVHKNLTFSLASAEGFLMTSEWAKANEVACVAVTVAMHFLFLVAFSWMLVEGLLLWRKVVAVSMHPGPGMRLYHATGWGVPVGIVAVTLAMLPHDYVAPGHCWLNVHTNAIWAFVGPVLFVLTANTCILARVVMITVSSARRRARMLSPQPCLQQQIWTQIWATVKPVLVLLPVLGLTWLAGILVHLSPAWAYAAVGLNSIQGLYIFLVYAACNEEVRSALQRMAEKKVAEVLRALGVWGGAAKEHSLPFSVLPLFLPPKPSTPRHPLKAPA</sequence>
<reference key="1">
    <citation type="journal article" date="2004" name="Genomics">
        <title>The human and mouse repertoire of the adhesion family of G-protein-coupled receptors.</title>
        <authorList>
            <person name="Bjarnadottir T.K."/>
            <person name="Fredriksson R."/>
            <person name="Hoeglund P.J."/>
            <person name="Gloriam D.E."/>
            <person name="Lagerstroem M.C."/>
            <person name="Schioeth H.B."/>
        </authorList>
    </citation>
    <scope>NUCLEOTIDE SEQUENCE [MRNA]</scope>
</reference>
<reference key="2">
    <citation type="submission" date="2001-07" db="EMBL/GenBank/DDBJ databases">
        <title>Genome-wide discovery and analysis of human seven transmembrane helix receptor genes.</title>
        <authorList>
            <person name="Suwa M."/>
            <person name="Sato T."/>
            <person name="Okouchi I."/>
            <person name="Arita M."/>
            <person name="Futami K."/>
            <person name="Matsumoto S."/>
            <person name="Tsutsumi S."/>
            <person name="Aburatani H."/>
            <person name="Asai K."/>
            <person name="Akiyama Y."/>
        </authorList>
    </citation>
    <scope>NUCLEOTIDE SEQUENCE [GENOMIC DNA]</scope>
</reference>
<reference key="3">
    <citation type="journal article" date="2004" name="Nature">
        <title>DNA sequence and analysis of human chromosome 9.</title>
        <authorList>
            <person name="Humphray S.J."/>
            <person name="Oliver K."/>
            <person name="Hunt A.R."/>
            <person name="Plumb R.W."/>
            <person name="Loveland J.E."/>
            <person name="Howe K.L."/>
            <person name="Andrews T.D."/>
            <person name="Searle S."/>
            <person name="Hunt S.E."/>
            <person name="Scott C.E."/>
            <person name="Jones M.C."/>
            <person name="Ainscough R."/>
            <person name="Almeida J.P."/>
            <person name="Ambrose K.D."/>
            <person name="Ashwell R.I.S."/>
            <person name="Babbage A.K."/>
            <person name="Babbage S."/>
            <person name="Bagguley C.L."/>
            <person name="Bailey J."/>
            <person name="Banerjee R."/>
            <person name="Barker D.J."/>
            <person name="Barlow K.F."/>
            <person name="Bates K."/>
            <person name="Beasley H."/>
            <person name="Beasley O."/>
            <person name="Bird C.P."/>
            <person name="Bray-Allen S."/>
            <person name="Brown A.J."/>
            <person name="Brown J.Y."/>
            <person name="Burford D."/>
            <person name="Burrill W."/>
            <person name="Burton J."/>
            <person name="Carder C."/>
            <person name="Carter N.P."/>
            <person name="Chapman J.C."/>
            <person name="Chen Y."/>
            <person name="Clarke G."/>
            <person name="Clark S.Y."/>
            <person name="Clee C.M."/>
            <person name="Clegg S."/>
            <person name="Collier R.E."/>
            <person name="Corby N."/>
            <person name="Crosier M."/>
            <person name="Cummings A.T."/>
            <person name="Davies J."/>
            <person name="Dhami P."/>
            <person name="Dunn M."/>
            <person name="Dutta I."/>
            <person name="Dyer L.W."/>
            <person name="Earthrowl M.E."/>
            <person name="Faulkner L."/>
            <person name="Fleming C.J."/>
            <person name="Frankish A."/>
            <person name="Frankland J.A."/>
            <person name="French L."/>
            <person name="Fricker D.G."/>
            <person name="Garner P."/>
            <person name="Garnett J."/>
            <person name="Ghori J."/>
            <person name="Gilbert J.G.R."/>
            <person name="Glison C."/>
            <person name="Grafham D.V."/>
            <person name="Gribble S."/>
            <person name="Griffiths C."/>
            <person name="Griffiths-Jones S."/>
            <person name="Grocock R."/>
            <person name="Guy J."/>
            <person name="Hall R.E."/>
            <person name="Hammond S."/>
            <person name="Harley J.L."/>
            <person name="Harrison E.S.I."/>
            <person name="Hart E.A."/>
            <person name="Heath P.D."/>
            <person name="Henderson C.D."/>
            <person name="Hopkins B.L."/>
            <person name="Howard P.J."/>
            <person name="Howden P.J."/>
            <person name="Huckle E."/>
            <person name="Johnson C."/>
            <person name="Johnson D."/>
            <person name="Joy A.A."/>
            <person name="Kay M."/>
            <person name="Keenan S."/>
            <person name="Kershaw J.K."/>
            <person name="Kimberley A.M."/>
            <person name="King A."/>
            <person name="Knights A."/>
            <person name="Laird G.K."/>
            <person name="Langford C."/>
            <person name="Lawlor S."/>
            <person name="Leongamornlert D.A."/>
            <person name="Leversha M."/>
            <person name="Lloyd C."/>
            <person name="Lloyd D.M."/>
            <person name="Lovell J."/>
            <person name="Martin S."/>
            <person name="Mashreghi-Mohammadi M."/>
            <person name="Matthews L."/>
            <person name="McLaren S."/>
            <person name="McLay K.E."/>
            <person name="McMurray A."/>
            <person name="Milne S."/>
            <person name="Nickerson T."/>
            <person name="Nisbett J."/>
            <person name="Nordsiek G."/>
            <person name="Pearce A.V."/>
            <person name="Peck A.I."/>
            <person name="Porter K.M."/>
            <person name="Pandian R."/>
            <person name="Pelan S."/>
            <person name="Phillimore B."/>
            <person name="Povey S."/>
            <person name="Ramsey Y."/>
            <person name="Rand V."/>
            <person name="Scharfe M."/>
            <person name="Sehra H.K."/>
            <person name="Shownkeen R."/>
            <person name="Sims S.K."/>
            <person name="Skuce C.D."/>
            <person name="Smith M."/>
            <person name="Steward C.A."/>
            <person name="Swarbreck D."/>
            <person name="Sycamore N."/>
            <person name="Tester J."/>
            <person name="Thorpe A."/>
            <person name="Tracey A."/>
            <person name="Tromans A."/>
            <person name="Thomas D.W."/>
            <person name="Wall M."/>
            <person name="Wallis J.M."/>
            <person name="West A.P."/>
            <person name="Whitehead S.L."/>
            <person name="Willey D.L."/>
            <person name="Williams S.A."/>
            <person name="Wilming L."/>
            <person name="Wray P.W."/>
            <person name="Young L."/>
            <person name="Ashurst J.L."/>
            <person name="Coulson A."/>
            <person name="Blocker H."/>
            <person name="Durbin R.M."/>
            <person name="Sulston J.E."/>
            <person name="Hubbard T."/>
            <person name="Jackson M.J."/>
            <person name="Bentley D.R."/>
            <person name="Beck S."/>
            <person name="Rogers J."/>
            <person name="Dunham I."/>
        </authorList>
    </citation>
    <scope>NUCLEOTIDE SEQUENCE [LARGE SCALE GENOMIC DNA]</scope>
</reference>
<reference key="4">
    <citation type="journal article" date="2003" name="Proc. Natl. Acad. Sci. U.S.A.">
        <title>The G protein-coupled receptor repertoires of human and mouse.</title>
        <authorList>
            <person name="Vassilatis D.K."/>
            <person name="Hohmann J.G."/>
            <person name="Zeng H."/>
            <person name="Li F."/>
            <person name="Ranchalis J.E."/>
            <person name="Mortrud M.T."/>
            <person name="Brown A."/>
            <person name="Rodriguez S.S."/>
            <person name="Weller J.R."/>
            <person name="Wright A.C."/>
            <person name="Bergmann J.E."/>
            <person name="Gaitanaris G.A."/>
        </authorList>
    </citation>
    <scope>NUCLEOTIDE SEQUENCE [LARGE SCALE MRNA] OF 619-897</scope>
</reference>
<reference key="5">
    <citation type="journal article" date="2015" name="Pharmacol. Rev.">
        <title>International union of basic and clinical pharmacology. XCIV. Adhesion G protein-coupled receptors.</title>
        <authorList>
            <person name="Hamann J."/>
            <person name="Aust G."/>
            <person name="Arac D."/>
            <person name="Engel F.B."/>
            <person name="Formstone C."/>
            <person name="Fredriksson R."/>
            <person name="Hall R.A."/>
            <person name="Harty B.L."/>
            <person name="Kirchhoff C."/>
            <person name="Knapp B."/>
            <person name="Krishnan A."/>
            <person name="Liebscher I."/>
            <person name="Lin H.H."/>
            <person name="Martinelli D.C."/>
            <person name="Monk K.R."/>
            <person name="Peeters M.C."/>
            <person name="Piao X."/>
            <person name="Promel S."/>
            <person name="Schoneberg T."/>
            <person name="Schwartz T.W."/>
            <person name="Singer K."/>
            <person name="Stacey M."/>
            <person name="Ushkaryov Y.A."/>
            <person name="Vallon M."/>
            <person name="Wolfrum U."/>
            <person name="Wright M.W."/>
            <person name="Xu L."/>
            <person name="Langenhan T."/>
            <person name="Schioth H.B."/>
        </authorList>
    </citation>
    <scope>NOMENCLATURE</scope>
</reference>
<reference key="6">
    <citation type="journal article" date="2017" name="Hum. Mutat.">
        <title>CSNK2B splice site mutations in patients cause intellectual disability with or without myoclonic epilepsy.</title>
        <authorList>
            <person name="Poirier K."/>
            <person name="Hubert L."/>
            <person name="Viot G."/>
            <person name="Rio M."/>
            <person name="Billuart P."/>
            <person name="Besmond C."/>
            <person name="Bienvenu T."/>
        </authorList>
    </citation>
    <scope>VARIANTS SER-170 AND THR-630</scope>
</reference>
<keyword id="KW-1015">Disulfide bond</keyword>
<keyword id="KW-0297">G-protein coupled receptor</keyword>
<keyword id="KW-0325">Glycoprotein</keyword>
<keyword id="KW-0472">Membrane</keyword>
<keyword id="KW-0675">Receptor</keyword>
<keyword id="KW-1185">Reference proteome</keyword>
<keyword id="KW-0807">Transducer</keyword>
<keyword id="KW-0812">Transmembrane</keyword>
<keyword id="KW-1133">Transmembrane helix</keyword>
<name>AGRD2_HUMAN</name>
<evidence type="ECO:0000255" key="1"/>
<evidence type="ECO:0000255" key="2">
    <source>
        <dbReference type="PROSITE-ProRule" id="PRU00098"/>
    </source>
</evidence>
<evidence type="ECO:0000255" key="3">
    <source>
        <dbReference type="PROSITE-ProRule" id="PRU01172"/>
    </source>
</evidence>
<evidence type="ECO:0000256" key="4">
    <source>
        <dbReference type="SAM" id="MobiDB-lite"/>
    </source>
</evidence>
<evidence type="ECO:0000269" key="5">
    <source>
    </source>
</evidence>
<evidence type="ECO:0000303" key="6">
    <source>
    </source>
</evidence>
<evidence type="ECO:0000305" key="7"/>
<comment type="function">
    <text>Orphan receptor.</text>
</comment>
<comment type="subcellular location">
    <subcellularLocation>
        <location evidence="1">Membrane</location>
        <topology evidence="1">Multi-pass membrane protein</topology>
    </subcellularLocation>
</comment>
<comment type="similarity">
    <text evidence="7">Belongs to the G-protein coupled receptor 2 family. Adhesion G-protein coupled receptor (ADGR) subfamily.</text>
</comment>
<comment type="sequence caution" evidence="7">
    <conflict type="erroneous gene model prediction">
        <sequence resource="EMBL-CDS" id="BAC05829"/>
    </conflict>
</comment>
<dbReference type="EMBL" id="AY278562">
    <property type="protein sequence ID" value="AAP35064.1"/>
    <property type="molecule type" value="mRNA"/>
</dbReference>
<dbReference type="EMBL" id="AB065601">
    <property type="protein sequence ID" value="BAC05829.1"/>
    <property type="status" value="ALT_SEQ"/>
    <property type="molecule type" value="Genomic_DNA"/>
</dbReference>
<dbReference type="EMBL" id="AL137846">
    <property type="status" value="NOT_ANNOTATED_CDS"/>
    <property type="molecule type" value="Genomic_DNA"/>
</dbReference>
<dbReference type="EMBL" id="AY255620">
    <property type="protein sequence ID" value="AAO85132.1"/>
    <property type="molecule type" value="mRNA"/>
</dbReference>
<dbReference type="SMR" id="Q7Z7M1"/>
<dbReference type="STRING" id="9606.ENSP00000335156"/>
<dbReference type="ChEMBL" id="CHEMBL4523880"/>
<dbReference type="MEROPS" id="P02.015"/>
<dbReference type="GlyCosmos" id="Q7Z7M1">
    <property type="glycosylation" value="2 sites, No reported glycans"/>
</dbReference>
<dbReference type="GlyGen" id="Q7Z7M1">
    <property type="glycosylation" value="4 sites"/>
</dbReference>
<dbReference type="iPTMnet" id="Q7Z7M1"/>
<dbReference type="PhosphoSitePlus" id="Q7Z7M1"/>
<dbReference type="BioMuta" id="ADGRD2"/>
<dbReference type="DMDM" id="59797942"/>
<dbReference type="PaxDb" id="9606-ENSP00000335156"/>
<dbReference type="Antibodypedia" id="52848">
    <property type="antibodies" value="45 antibodies from 17 providers"/>
</dbReference>
<dbReference type="UCSC" id="uc033dhj.2">
    <property type="organism name" value="human"/>
</dbReference>
<dbReference type="AGR" id="HGNC:18651"/>
<dbReference type="GeneCards" id="ADGRD2"/>
<dbReference type="HGNC" id="HGNC:18651">
    <property type="gene designation" value="ADGRD2"/>
</dbReference>
<dbReference type="MIM" id="620837">
    <property type="type" value="gene"/>
</dbReference>
<dbReference type="neXtProt" id="NX_Q7Z7M1"/>
<dbReference type="PharmGKB" id="PA134882616"/>
<dbReference type="VEuPathDB" id="HostDB:ENSG00000180264"/>
<dbReference type="eggNOG" id="KOG4193">
    <property type="taxonomic scope" value="Eukaryota"/>
</dbReference>
<dbReference type="HOGENOM" id="CLU_015074_0_0_1"/>
<dbReference type="InParanoid" id="Q7Z7M1"/>
<dbReference type="OrthoDB" id="1100386at2759"/>
<dbReference type="PAN-GO" id="Q7Z7M1">
    <property type="GO annotations" value="3 GO annotations based on evolutionary models"/>
</dbReference>
<dbReference type="PhylomeDB" id="Q7Z7M1"/>
<dbReference type="TreeFam" id="TF351999"/>
<dbReference type="GeneWiki" id="GPR144"/>
<dbReference type="Pharos" id="Q7Z7M1">
    <property type="development level" value="Tdark"/>
</dbReference>
<dbReference type="PRO" id="PR:Q7Z7M1"/>
<dbReference type="Proteomes" id="UP000005640">
    <property type="component" value="Chromosome 9"/>
</dbReference>
<dbReference type="RNAct" id="Q7Z7M1">
    <property type="molecule type" value="protein"/>
</dbReference>
<dbReference type="Bgee" id="ENSG00000180264">
    <property type="expression patterns" value="Expressed in parotid gland and 137 other cell types or tissues"/>
</dbReference>
<dbReference type="ExpressionAtlas" id="Q7Z7M1">
    <property type="expression patterns" value="baseline and differential"/>
</dbReference>
<dbReference type="GO" id="GO:0016020">
    <property type="term" value="C:membrane"/>
    <property type="evidence" value="ECO:0000304"/>
    <property type="project" value="GDB"/>
</dbReference>
<dbReference type="GO" id="GO:0005886">
    <property type="term" value="C:plasma membrane"/>
    <property type="evidence" value="ECO:0000318"/>
    <property type="project" value="GO_Central"/>
</dbReference>
<dbReference type="GO" id="GO:0004930">
    <property type="term" value="F:G protein-coupled receptor activity"/>
    <property type="evidence" value="ECO:0000318"/>
    <property type="project" value="GO_Central"/>
</dbReference>
<dbReference type="GO" id="GO:0007189">
    <property type="term" value="P:adenylate cyclase-activating G protein-coupled receptor signaling pathway"/>
    <property type="evidence" value="ECO:0000318"/>
    <property type="project" value="GO_Central"/>
</dbReference>
<dbReference type="GO" id="GO:0007166">
    <property type="term" value="P:cell surface receptor signaling pathway"/>
    <property type="evidence" value="ECO:0007669"/>
    <property type="project" value="InterPro"/>
</dbReference>
<dbReference type="GO" id="GO:0007186">
    <property type="term" value="P:G protein-coupled receptor signaling pathway"/>
    <property type="evidence" value="ECO:0000304"/>
    <property type="project" value="GDB"/>
</dbReference>
<dbReference type="CDD" id="cd00037">
    <property type="entry name" value="CLECT"/>
    <property type="match status" value="1"/>
</dbReference>
<dbReference type="FunFam" id="1.20.1070.10:FF:000252">
    <property type="entry name" value="Adhesion G protein-coupled receptor D2"/>
    <property type="match status" value="1"/>
</dbReference>
<dbReference type="FunFam" id="2.60.120.200:FF:000211">
    <property type="entry name" value="Adhesion G protein-coupled receptor D2"/>
    <property type="match status" value="1"/>
</dbReference>
<dbReference type="FunFam" id="2.60.220.50:FF:000034">
    <property type="entry name" value="Adhesion G protein-coupled receptor D2"/>
    <property type="match status" value="1"/>
</dbReference>
<dbReference type="Gene3D" id="2.60.120.200">
    <property type="match status" value="1"/>
</dbReference>
<dbReference type="Gene3D" id="2.60.220.50">
    <property type="match status" value="1"/>
</dbReference>
<dbReference type="Gene3D" id="1.20.1070.10">
    <property type="entry name" value="Rhodopsin 7-helix transmembrane proteins"/>
    <property type="match status" value="1"/>
</dbReference>
<dbReference type="InterPro" id="IPR013320">
    <property type="entry name" value="ConA-like_dom_sf"/>
</dbReference>
<dbReference type="InterPro" id="IPR057244">
    <property type="entry name" value="GAIN_B"/>
</dbReference>
<dbReference type="InterPro" id="IPR046338">
    <property type="entry name" value="GAIN_dom_sf"/>
</dbReference>
<dbReference type="InterPro" id="IPR017981">
    <property type="entry name" value="GPCR_2-like_7TM"/>
</dbReference>
<dbReference type="InterPro" id="IPR000832">
    <property type="entry name" value="GPCR_2_secretin-like"/>
</dbReference>
<dbReference type="InterPro" id="IPR000203">
    <property type="entry name" value="GPS"/>
</dbReference>
<dbReference type="InterPro" id="IPR001759">
    <property type="entry name" value="Pentraxin-related"/>
</dbReference>
<dbReference type="PANTHER" id="PTHR12011">
    <property type="entry name" value="ADHESION G-PROTEIN COUPLED RECEPTOR"/>
    <property type="match status" value="1"/>
</dbReference>
<dbReference type="PANTHER" id="PTHR12011:SF58">
    <property type="entry name" value="ADHESION G-PROTEIN COUPLED RECEPTOR D2"/>
    <property type="match status" value="1"/>
</dbReference>
<dbReference type="Pfam" id="PF00002">
    <property type="entry name" value="7tm_2"/>
    <property type="match status" value="1"/>
</dbReference>
<dbReference type="Pfam" id="PF01825">
    <property type="entry name" value="GPS"/>
    <property type="match status" value="1"/>
</dbReference>
<dbReference type="Pfam" id="PF00354">
    <property type="entry name" value="Pentaxin"/>
    <property type="match status" value="1"/>
</dbReference>
<dbReference type="PRINTS" id="PR00895">
    <property type="entry name" value="PENTAXIN"/>
</dbReference>
<dbReference type="SMART" id="SM00303">
    <property type="entry name" value="GPS"/>
    <property type="match status" value="1"/>
</dbReference>
<dbReference type="SMART" id="SM00159">
    <property type="entry name" value="PTX"/>
    <property type="match status" value="1"/>
</dbReference>
<dbReference type="SUPFAM" id="SSF49899">
    <property type="entry name" value="Concanavalin A-like lectins/glucanases"/>
    <property type="match status" value="1"/>
</dbReference>
<dbReference type="PROSITE" id="PS50261">
    <property type="entry name" value="G_PROTEIN_RECEP_F2_4"/>
    <property type="match status" value="1"/>
</dbReference>
<dbReference type="PROSITE" id="PS50221">
    <property type="entry name" value="GAIN_B"/>
    <property type="match status" value="1"/>
</dbReference>
<dbReference type="PROSITE" id="PS51828">
    <property type="entry name" value="PTX_2"/>
    <property type="match status" value="1"/>
</dbReference>
<proteinExistence type="evidence at transcript level"/>
<protein>
    <recommendedName>
        <fullName evidence="6">Adhesion G protein-coupled receptor D2</fullName>
    </recommendedName>
    <alternativeName>
        <fullName>G-protein coupled receptor 144</fullName>
    </alternativeName>
    <alternativeName>
        <fullName>G-protein coupled receptor PGR24</fullName>
    </alternativeName>
</protein>
<organism>
    <name type="scientific">Homo sapiens</name>
    <name type="common">Human</name>
    <dbReference type="NCBI Taxonomy" id="9606"/>
    <lineage>
        <taxon>Eukaryota</taxon>
        <taxon>Metazoa</taxon>
        <taxon>Chordata</taxon>
        <taxon>Craniata</taxon>
        <taxon>Vertebrata</taxon>
        <taxon>Euteleostomi</taxon>
        <taxon>Mammalia</taxon>
        <taxon>Eutheria</taxon>
        <taxon>Euarchontoglires</taxon>
        <taxon>Primates</taxon>
        <taxon>Haplorrhini</taxon>
        <taxon>Catarrhini</taxon>
        <taxon>Hominidae</taxon>
        <taxon>Homo</taxon>
    </lineage>
</organism>
<gene>
    <name type="primary">ADGRD2</name>
    <name type="synonym">GPR144</name>
    <name type="synonym">PGR24</name>
</gene>
<feature type="chain" id="PRO_0000070338" description="Adhesion G protein-coupled receptor D2">
    <location>
        <begin position="1"/>
        <end position="963"/>
    </location>
</feature>
<feature type="topological domain" description="Extracellular" evidence="7">
    <location>
        <begin position="1"/>
        <end position="662"/>
    </location>
</feature>
<feature type="transmembrane region" description="Helical; Name=1" evidence="1">
    <location>
        <begin position="663"/>
        <end position="683"/>
    </location>
</feature>
<feature type="topological domain" description="Cytoplasmic" evidence="7">
    <location>
        <begin position="684"/>
        <end position="691"/>
    </location>
</feature>
<feature type="transmembrane region" description="Helical; Name=2" evidence="1">
    <location>
        <begin position="692"/>
        <end position="712"/>
    </location>
</feature>
<feature type="topological domain" description="Extracellular" evidence="7">
    <location>
        <begin position="713"/>
        <end position="720"/>
    </location>
</feature>
<feature type="transmembrane region" description="Helical; Name=3" evidence="1">
    <location>
        <begin position="721"/>
        <end position="741"/>
    </location>
</feature>
<feature type="topological domain" description="Cytoplasmic" evidence="7">
    <location>
        <begin position="742"/>
        <end position="762"/>
    </location>
</feature>
<feature type="transmembrane region" description="Helical; Name=4" evidence="1">
    <location>
        <begin position="763"/>
        <end position="783"/>
    </location>
</feature>
<feature type="topological domain" description="Extracellular" evidence="7">
    <location>
        <begin position="784"/>
        <end position="800"/>
    </location>
</feature>
<feature type="transmembrane region" description="Helical; Name=5" evidence="1">
    <location>
        <begin position="801"/>
        <end position="821"/>
    </location>
</feature>
<feature type="topological domain" description="Cytoplasmic" evidence="7">
    <location>
        <begin position="822"/>
        <end position="857"/>
    </location>
</feature>
<feature type="transmembrane region" description="Helical; Name=6" evidence="1">
    <location>
        <begin position="858"/>
        <end position="878"/>
    </location>
</feature>
<feature type="topological domain" description="Extracellular" evidence="7">
    <location>
        <begin position="879"/>
        <end position="880"/>
    </location>
</feature>
<feature type="transmembrane region" description="Helical; Name=7" evidence="1">
    <location>
        <begin position="881"/>
        <end position="901"/>
    </location>
</feature>
<feature type="topological domain" description="Cytoplasmic" evidence="7">
    <location>
        <begin position="902"/>
        <end position="963"/>
    </location>
</feature>
<feature type="domain" description="Pentraxin (PTX)" evidence="3">
    <location>
        <begin position="116"/>
        <end position="325"/>
    </location>
</feature>
<feature type="domain" description="GAIN-B" evidence="2">
    <location>
        <begin position="489"/>
        <end position="649"/>
    </location>
</feature>
<feature type="region of interest" description="Disordered" evidence="4">
    <location>
        <begin position="18"/>
        <end position="38"/>
    </location>
</feature>
<feature type="region of interest" description="GPS" evidence="2">
    <location>
        <begin position="599"/>
        <end position="649"/>
    </location>
</feature>
<feature type="glycosylation site" description="N-linked (GlcNAc...) asparagine" evidence="1">
    <location>
        <position position="271"/>
    </location>
</feature>
<feature type="glycosylation site" description="N-linked (GlcNAc...) asparagine" evidence="1">
    <location>
        <position position="634"/>
    </location>
</feature>
<feature type="disulfide bond" evidence="3">
    <location>
        <begin position="146"/>
        <end position="212"/>
    </location>
</feature>
<feature type="disulfide bond" evidence="2">
    <location>
        <begin position="619"/>
        <end position="633"/>
    </location>
</feature>
<feature type="sequence variant" id="VAR_083658" evidence="5">
    <original>P</original>
    <variation>S</variation>
    <location>
        <position position="170"/>
    </location>
</feature>
<feature type="sequence variant" id="VAR_083659" evidence="5">
    <original>A</original>
    <variation>T</variation>
    <location>
        <position position="630"/>
    </location>
</feature>